<reference key="1">
    <citation type="online journal article" date="1998" name="Plant Gene Register">
        <title>Cloning and characterization of an Arabidopsis cDNA homologous to the matrix metalloproteinases.</title>
        <authorList>
            <person name="Liu C.Y."/>
            <person name="Xu H."/>
            <person name="Graham J.S."/>
        </authorList>
        <locator>PGR98-130</locator>
    </citation>
    <scope>NUCLEOTIDE SEQUENCE [MRNA]</scope>
    <scope>DEVELOPMENTAL STAGE</scope>
    <source>
        <strain>cv. Landsberg erecta</strain>
    </source>
</reference>
<reference key="2">
    <citation type="journal article" date="1999" name="Nature">
        <title>Sequence and analysis of chromosome 2 of the plant Arabidopsis thaliana.</title>
        <authorList>
            <person name="Lin X."/>
            <person name="Kaul S."/>
            <person name="Rounsley S.D."/>
            <person name="Shea T.P."/>
            <person name="Benito M.-I."/>
            <person name="Town C.D."/>
            <person name="Fujii C.Y."/>
            <person name="Mason T.M."/>
            <person name="Bowman C.L."/>
            <person name="Barnstead M.E."/>
            <person name="Feldblyum T.V."/>
            <person name="Buell C.R."/>
            <person name="Ketchum K.A."/>
            <person name="Lee J.J."/>
            <person name="Ronning C.M."/>
            <person name="Koo H.L."/>
            <person name="Moffat K.S."/>
            <person name="Cronin L.A."/>
            <person name="Shen M."/>
            <person name="Pai G."/>
            <person name="Van Aken S."/>
            <person name="Umayam L."/>
            <person name="Tallon L.J."/>
            <person name="Gill J.E."/>
            <person name="Adams M.D."/>
            <person name="Carrera A.J."/>
            <person name="Creasy T.H."/>
            <person name="Goodman H.M."/>
            <person name="Somerville C.R."/>
            <person name="Copenhaver G.P."/>
            <person name="Preuss D."/>
            <person name="Nierman W.C."/>
            <person name="White O."/>
            <person name="Eisen J.A."/>
            <person name="Salzberg S.L."/>
            <person name="Fraser C.M."/>
            <person name="Venter J.C."/>
        </authorList>
    </citation>
    <scope>NUCLEOTIDE SEQUENCE [LARGE SCALE GENOMIC DNA]</scope>
    <source>
        <strain>cv. Columbia</strain>
    </source>
</reference>
<reference key="3">
    <citation type="journal article" date="2017" name="Plant J.">
        <title>Araport11: a complete reannotation of the Arabidopsis thaliana reference genome.</title>
        <authorList>
            <person name="Cheng C.Y."/>
            <person name="Krishnakumar V."/>
            <person name="Chan A.P."/>
            <person name="Thibaud-Nissen F."/>
            <person name="Schobel S."/>
            <person name="Town C.D."/>
        </authorList>
    </citation>
    <scope>GENOME REANNOTATION</scope>
    <source>
        <strain>cv. Columbia</strain>
    </source>
</reference>
<reference key="4">
    <citation type="journal article" date="2002" name="Science">
        <title>Functional annotation of a full-length Arabidopsis cDNA collection.</title>
        <authorList>
            <person name="Seki M."/>
            <person name="Narusaka M."/>
            <person name="Kamiya A."/>
            <person name="Ishida J."/>
            <person name="Satou M."/>
            <person name="Sakurai T."/>
            <person name="Nakajima M."/>
            <person name="Enju A."/>
            <person name="Akiyama K."/>
            <person name="Oono Y."/>
            <person name="Muramatsu M."/>
            <person name="Hayashizaki Y."/>
            <person name="Kawai J."/>
            <person name="Carninci P."/>
            <person name="Itoh M."/>
            <person name="Ishii Y."/>
            <person name="Arakawa T."/>
            <person name="Shibata K."/>
            <person name="Shinagawa A."/>
            <person name="Shinozaki K."/>
        </authorList>
    </citation>
    <scope>NUCLEOTIDE SEQUENCE [LARGE SCALE MRNA]</scope>
    <source>
        <strain>cv. Columbia</strain>
    </source>
</reference>
<reference key="5">
    <citation type="journal article" date="2003" name="Science">
        <title>Empirical analysis of transcriptional activity in the Arabidopsis genome.</title>
        <authorList>
            <person name="Yamada K."/>
            <person name="Lim J."/>
            <person name="Dale J.M."/>
            <person name="Chen H."/>
            <person name="Shinn P."/>
            <person name="Palm C.J."/>
            <person name="Southwick A.M."/>
            <person name="Wu H.C."/>
            <person name="Kim C.J."/>
            <person name="Nguyen M."/>
            <person name="Pham P.K."/>
            <person name="Cheuk R.F."/>
            <person name="Karlin-Newmann G."/>
            <person name="Liu S.X."/>
            <person name="Lam B."/>
            <person name="Sakano H."/>
            <person name="Wu T."/>
            <person name="Yu G."/>
            <person name="Miranda M."/>
            <person name="Quach H.L."/>
            <person name="Tripp M."/>
            <person name="Chang C.H."/>
            <person name="Lee J.M."/>
            <person name="Toriumi M.J."/>
            <person name="Chan M.M."/>
            <person name="Tang C.C."/>
            <person name="Onodera C.S."/>
            <person name="Deng J.M."/>
            <person name="Akiyama K."/>
            <person name="Ansari Y."/>
            <person name="Arakawa T."/>
            <person name="Banh J."/>
            <person name="Banno F."/>
            <person name="Bowser L."/>
            <person name="Brooks S.Y."/>
            <person name="Carninci P."/>
            <person name="Chao Q."/>
            <person name="Choy N."/>
            <person name="Enju A."/>
            <person name="Goldsmith A.D."/>
            <person name="Gurjal M."/>
            <person name="Hansen N.F."/>
            <person name="Hayashizaki Y."/>
            <person name="Johnson-Hopson C."/>
            <person name="Hsuan V.W."/>
            <person name="Iida K."/>
            <person name="Karnes M."/>
            <person name="Khan S."/>
            <person name="Koesema E."/>
            <person name="Ishida J."/>
            <person name="Jiang P.X."/>
            <person name="Jones T."/>
            <person name="Kawai J."/>
            <person name="Kamiya A."/>
            <person name="Meyers C."/>
            <person name="Nakajima M."/>
            <person name="Narusaka M."/>
            <person name="Seki M."/>
            <person name="Sakurai T."/>
            <person name="Satou M."/>
            <person name="Tamse R."/>
            <person name="Vaysberg M."/>
            <person name="Wallender E.K."/>
            <person name="Wong C."/>
            <person name="Yamamura Y."/>
            <person name="Yuan S."/>
            <person name="Shinozaki K."/>
            <person name="Davis R.W."/>
            <person name="Theologis A."/>
            <person name="Ecker J.R."/>
        </authorList>
    </citation>
    <scope>NUCLEOTIDE SEQUENCE [LARGE SCALE MRNA]</scope>
    <source>
        <strain>cv. Columbia</strain>
    </source>
</reference>
<reference key="6">
    <citation type="journal article" date="1999" name="J. Biol. Chem.">
        <title>Matrix metalloproteinase homologues from Arabidopsis thaliana. Expression and activity.</title>
        <authorList>
            <person name="Maidment J.M."/>
            <person name="Moore D."/>
            <person name="Murphy G.P."/>
            <person name="Murphy G."/>
            <person name="Clark I.M."/>
        </authorList>
    </citation>
    <scope>TISSUE SPECIFICITY</scope>
    <scope>GENE FAMILY</scope>
    <scope>NOMENCLATURE</scope>
</reference>
<reference key="7">
    <citation type="journal article" date="2014" name="Biochem. J.">
        <title>Family-wide characterization of matrix metalloproteinases from Arabidopsis thaliana reveals their distinct proteolytic activity and cleavage site specificity.</title>
        <authorList>
            <person name="Marino G."/>
            <person name="Huesgen P.F."/>
            <person name="Eckhard U."/>
            <person name="Overall C.M."/>
            <person name="Schroeder W.P."/>
            <person name="Funk C."/>
        </authorList>
    </citation>
    <scope>FUNCTION</scope>
    <scope>BIOPHYSICOCHEMICAL PROPERTIES</scope>
    <scope>ACTIVITY REGULATION</scope>
    <scope>GENE FAMILY</scope>
    <source>
        <strain>cv. Columbia</strain>
    </source>
</reference>
<protein>
    <recommendedName>
        <fullName evidence="10">Metalloendoproteinase 4-MMP</fullName>
        <shortName evidence="10">At4-MMP</shortName>
        <ecNumber evidence="12">3.4.24.-</ecNumber>
    </recommendedName>
    <alternativeName>
        <fullName evidence="11">Matrix metalloproteinase 1</fullName>
        <shortName evidence="11">AtMMP1</shortName>
    </alternativeName>
</protein>
<gene>
    <name evidence="10" type="primary">4MMP</name>
    <name evidence="11" type="synonym">MMP1</name>
    <name evidence="13" type="ordered locus">At2g45040</name>
    <name evidence="12" type="ORF">T14P1.15</name>
</gene>
<sequence>MHHHHHPCNRKPFTTIFSFFLLYLNLHNQQIIEARNPSQFTTNPSPDVSIPEIKRHLQQYGYLPQNKESDDVSFEQALVRYQKNLGLPITGKPDSDTLSQILLPRCGFPDDVEPKTAPFHTGKKYVYFPGRPRWTRDVPLKLTYAFSQENLTPYLAPTDIRRVFRRAFGKWASVIPVSFIETEDYVIADIKIGFFNGDHGDGEPFDGVLGVLAHTFSPENGRLHLDKAETWAVDFDEEKSSVAVDLESVAVHEIGHVLGLGHSSVKDAAMYPTLKPRSKKVNLNMDDVVGVQSLYGTNPNFTLNSLLASETSTNLADGSRIRSQGMIYSTLSTVIALCFLNW</sequence>
<name>4MMP_ARATH</name>
<organism evidence="14">
    <name type="scientific">Arabidopsis thaliana</name>
    <name type="common">Mouse-ear cress</name>
    <dbReference type="NCBI Taxonomy" id="3702"/>
    <lineage>
        <taxon>Eukaryota</taxon>
        <taxon>Viridiplantae</taxon>
        <taxon>Streptophyta</taxon>
        <taxon>Embryophyta</taxon>
        <taxon>Tracheophyta</taxon>
        <taxon>Spermatophyta</taxon>
        <taxon>Magnoliopsida</taxon>
        <taxon>eudicotyledons</taxon>
        <taxon>Gunneridae</taxon>
        <taxon>Pentapetalae</taxon>
        <taxon>rosids</taxon>
        <taxon>malvids</taxon>
        <taxon>Brassicales</taxon>
        <taxon>Brassicaceae</taxon>
        <taxon>Camelineae</taxon>
        <taxon>Arabidopsis</taxon>
    </lineage>
</organism>
<accession>Q8GWW6</accession>
<accession>O65340</accession>
<dbReference type="EC" id="3.4.24.-" evidence="12"/>
<dbReference type="EMBL" id="AF062640">
    <property type="protein sequence ID" value="AAC31167.1"/>
    <property type="molecule type" value="mRNA"/>
</dbReference>
<dbReference type="EMBL" id="CP002685">
    <property type="protein sequence ID" value="AEC10499.1"/>
    <property type="molecule type" value="Genomic_DNA"/>
</dbReference>
<dbReference type="EMBL" id="AK118590">
    <property type="protein sequence ID" value="BAC43190.1"/>
    <property type="molecule type" value="mRNA"/>
</dbReference>
<dbReference type="EMBL" id="BT008782">
    <property type="protein sequence ID" value="AAP68221.1"/>
    <property type="molecule type" value="mRNA"/>
</dbReference>
<dbReference type="PIR" id="G84885">
    <property type="entry name" value="G84885"/>
</dbReference>
<dbReference type="PIR" id="T51957">
    <property type="entry name" value="T51957"/>
</dbReference>
<dbReference type="RefSeq" id="NP_182030.1">
    <property type="nucleotide sequence ID" value="NM_130068.3"/>
</dbReference>
<dbReference type="SMR" id="Q8GWW6"/>
<dbReference type="FunCoup" id="Q8GWW6">
    <property type="interactions" value="30"/>
</dbReference>
<dbReference type="IntAct" id="Q8GWW6">
    <property type="interactions" value="1"/>
</dbReference>
<dbReference type="STRING" id="3702.Q8GWW6"/>
<dbReference type="MEROPS" id="M10.A02"/>
<dbReference type="GlyCosmos" id="Q8GWW6">
    <property type="glycosylation" value="1 site, No reported glycans"/>
</dbReference>
<dbReference type="GlyGen" id="Q8GWW6">
    <property type="glycosylation" value="1 site"/>
</dbReference>
<dbReference type="PaxDb" id="3702-AT2G45040.1"/>
<dbReference type="ProteomicsDB" id="245158"/>
<dbReference type="EnsemblPlants" id="AT2G45040.1">
    <property type="protein sequence ID" value="AT2G45040.1"/>
    <property type="gene ID" value="AT2G45040"/>
</dbReference>
<dbReference type="GeneID" id="819111"/>
<dbReference type="Gramene" id="AT2G45040.1">
    <property type="protein sequence ID" value="AT2G45040.1"/>
    <property type="gene ID" value="AT2G45040"/>
</dbReference>
<dbReference type="KEGG" id="ath:AT2G45040"/>
<dbReference type="Araport" id="AT2G45040"/>
<dbReference type="TAIR" id="AT2G45040"/>
<dbReference type="eggNOG" id="KOG1565">
    <property type="taxonomic scope" value="Eukaryota"/>
</dbReference>
<dbReference type="HOGENOM" id="CLU_015489_4_0_1"/>
<dbReference type="InParanoid" id="Q8GWW6"/>
<dbReference type="OMA" id="HHPCNRK"/>
<dbReference type="OrthoDB" id="406838at2759"/>
<dbReference type="PhylomeDB" id="Q8GWW6"/>
<dbReference type="PRO" id="PR:Q8GWW6"/>
<dbReference type="Proteomes" id="UP000006548">
    <property type="component" value="Chromosome 2"/>
</dbReference>
<dbReference type="ExpressionAtlas" id="Q8GWW6">
    <property type="expression patterns" value="baseline and differential"/>
</dbReference>
<dbReference type="GO" id="GO:0031012">
    <property type="term" value="C:extracellular matrix"/>
    <property type="evidence" value="ECO:0007669"/>
    <property type="project" value="InterPro"/>
</dbReference>
<dbReference type="GO" id="GO:0005886">
    <property type="term" value="C:plasma membrane"/>
    <property type="evidence" value="ECO:0007669"/>
    <property type="project" value="UniProtKB-SubCell"/>
</dbReference>
<dbReference type="GO" id="GO:0098552">
    <property type="term" value="C:side of membrane"/>
    <property type="evidence" value="ECO:0007669"/>
    <property type="project" value="UniProtKB-KW"/>
</dbReference>
<dbReference type="GO" id="GO:0004222">
    <property type="term" value="F:metalloendopeptidase activity"/>
    <property type="evidence" value="ECO:0000314"/>
    <property type="project" value="UniProtKB"/>
</dbReference>
<dbReference type="GO" id="GO:0008270">
    <property type="term" value="F:zinc ion binding"/>
    <property type="evidence" value="ECO:0007669"/>
    <property type="project" value="InterPro"/>
</dbReference>
<dbReference type="GO" id="GO:0006508">
    <property type="term" value="P:proteolysis"/>
    <property type="evidence" value="ECO:0007669"/>
    <property type="project" value="UniProtKB-KW"/>
</dbReference>
<dbReference type="CDD" id="cd04278">
    <property type="entry name" value="ZnMc_MMP"/>
    <property type="match status" value="1"/>
</dbReference>
<dbReference type="FunFam" id="3.40.390.10:FF:000018">
    <property type="entry name" value="Metalloendoproteinase 1"/>
    <property type="match status" value="1"/>
</dbReference>
<dbReference type="Gene3D" id="3.40.390.10">
    <property type="entry name" value="Collagenase (Catalytic Domain)"/>
    <property type="match status" value="1"/>
</dbReference>
<dbReference type="InterPro" id="IPR033739">
    <property type="entry name" value="M10A_MMP"/>
</dbReference>
<dbReference type="InterPro" id="IPR024079">
    <property type="entry name" value="MetalloPept_cat_dom_sf"/>
</dbReference>
<dbReference type="InterPro" id="IPR001818">
    <property type="entry name" value="Pept_M10_metallopeptidase"/>
</dbReference>
<dbReference type="InterPro" id="IPR021190">
    <property type="entry name" value="Pept_M10A"/>
</dbReference>
<dbReference type="InterPro" id="IPR006026">
    <property type="entry name" value="Peptidase_Metallo"/>
</dbReference>
<dbReference type="InterPro" id="IPR002477">
    <property type="entry name" value="Peptidoglycan-bd-like"/>
</dbReference>
<dbReference type="InterPro" id="IPR036365">
    <property type="entry name" value="PGBD-like_sf"/>
</dbReference>
<dbReference type="PANTHER" id="PTHR10201">
    <property type="entry name" value="MATRIX METALLOPROTEINASE"/>
    <property type="match status" value="1"/>
</dbReference>
<dbReference type="PANTHER" id="PTHR10201:SF321">
    <property type="entry name" value="METALLOENDOPROTEINASE 4-MMP"/>
    <property type="match status" value="1"/>
</dbReference>
<dbReference type="Pfam" id="PF00413">
    <property type="entry name" value="Peptidase_M10"/>
    <property type="match status" value="1"/>
</dbReference>
<dbReference type="Pfam" id="PF01471">
    <property type="entry name" value="PG_binding_1"/>
    <property type="match status" value="1"/>
</dbReference>
<dbReference type="PRINTS" id="PR00138">
    <property type="entry name" value="MATRIXIN"/>
</dbReference>
<dbReference type="SMART" id="SM00235">
    <property type="entry name" value="ZnMc"/>
    <property type="match status" value="1"/>
</dbReference>
<dbReference type="SUPFAM" id="SSF55486">
    <property type="entry name" value="Metalloproteases ('zincins'), catalytic domain"/>
    <property type="match status" value="1"/>
</dbReference>
<dbReference type="SUPFAM" id="SSF47090">
    <property type="entry name" value="PGBD-like"/>
    <property type="match status" value="1"/>
</dbReference>
<dbReference type="PROSITE" id="PS00142">
    <property type="entry name" value="ZINC_PROTEASE"/>
    <property type="match status" value="1"/>
</dbReference>
<proteinExistence type="evidence at protein level"/>
<feature type="signal peptide" evidence="4">
    <location>
        <begin position="1"/>
        <end position="34"/>
    </location>
</feature>
<feature type="propeptide" id="PRO_0000433528" description="Activation peptide" evidence="3">
    <location>
        <begin position="35"/>
        <end position="124"/>
    </location>
</feature>
<feature type="chain" id="PRO_0000433529" description="Metalloendoproteinase 4-MMP" evidence="4">
    <location>
        <begin position="125"/>
        <end position="317"/>
    </location>
</feature>
<feature type="propeptide" id="PRO_0000433530" description="Removed in mature form" evidence="4">
    <location>
        <begin position="318"/>
        <end position="342"/>
    </location>
</feature>
<feature type="short sequence motif" description="Cysteine switch" evidence="4">
    <location>
        <begin position="104"/>
        <end position="111"/>
    </location>
</feature>
<feature type="active site" evidence="6">
    <location>
        <position position="253"/>
    </location>
</feature>
<feature type="binding site" description="in inhibited form" evidence="1">
    <location>
        <position position="106"/>
    </location>
    <ligand>
        <name>Zn(2+)</name>
        <dbReference type="ChEBI" id="CHEBI:29105"/>
        <note>catalytic</note>
    </ligand>
</feature>
<feature type="binding site" evidence="6">
    <location>
        <position position="252"/>
    </location>
    <ligand>
        <name>Zn(2+)</name>
        <dbReference type="ChEBI" id="CHEBI:29105"/>
        <note>catalytic</note>
    </ligand>
</feature>
<feature type="binding site" evidence="6">
    <location>
        <position position="256"/>
    </location>
    <ligand>
        <name>Zn(2+)</name>
        <dbReference type="ChEBI" id="CHEBI:29105"/>
        <note>catalytic</note>
    </ligand>
</feature>
<feature type="binding site" evidence="6">
    <location>
        <position position="262"/>
    </location>
    <ligand>
        <name>Zn(2+)</name>
        <dbReference type="ChEBI" id="CHEBI:29105"/>
        <note>catalytic</note>
    </ligand>
</feature>
<feature type="lipid moiety-binding region" description="GPI-anchor amidated aspartate" evidence="4">
    <location>
        <position position="317"/>
    </location>
</feature>
<feature type="glycosylation site" description="N-linked (GlcNAc...) asparagine" evidence="5">
    <location>
        <position position="300"/>
    </location>
</feature>
<feature type="sequence conflict" description="In Ref. 1; AAC31167." evidence="12" ref="1">
    <location>
        <position position="161"/>
    </location>
</feature>
<feature type="sequence conflict" description="In Ref. 1; AAC31167." evidence="12" ref="1">
    <original>K</original>
    <variation>E</variation>
    <location>
        <position position="170"/>
    </location>
</feature>
<feature type="sequence conflict" description="In Ref. 1; AAC31167." evidence="12" ref="1">
    <original>T</original>
    <variation>A</variation>
    <location>
        <position position="330"/>
    </location>
</feature>
<keyword id="KW-1003">Cell membrane</keyword>
<keyword id="KW-0325">Glycoprotein</keyword>
<keyword id="KW-0336">GPI-anchor</keyword>
<keyword id="KW-0378">Hydrolase</keyword>
<keyword id="KW-0449">Lipoprotein</keyword>
<keyword id="KW-0472">Membrane</keyword>
<keyword id="KW-0479">Metal-binding</keyword>
<keyword id="KW-0482">Metalloprotease</keyword>
<keyword id="KW-0645">Protease</keyword>
<keyword id="KW-1185">Reference proteome</keyword>
<keyword id="KW-0732">Signal</keyword>
<keyword id="KW-0862">Zinc</keyword>
<keyword id="KW-0865">Zymogen</keyword>
<comment type="function">
    <text evidence="2 8">Matrix metalloproteinases (MMPs) or matrixins may play a role in the degradation and remodeling of the extracellular matrix (ECM) during development or in response to stresses (By similarity). Active on myelin basic protein (MBP) and, to some extent, on McaPLGLDpaAR-NH(2) (QF24) and beta-casein (PubMed:24156403).</text>
</comment>
<comment type="cofactor">
    <cofactor evidence="1">
        <name>Zn(2+)</name>
        <dbReference type="ChEBI" id="CHEBI:29105"/>
    </cofactor>
    <text evidence="1">Binds 1 zinc ion per subunit.</text>
</comment>
<comment type="activity regulation">
    <text evidence="8">Repressed by acetohydroxamic acid (AHA).</text>
</comment>
<comment type="biophysicochemical properties">
    <phDependence>
        <text evidence="8">Optimum pH is 5-9.</text>
    </phDependence>
    <temperatureDependence>
        <text evidence="8">Optimum temperature is 45-55 degrees Celsius.</text>
    </temperatureDependence>
</comment>
<comment type="subcellular location">
    <subcellularLocation>
        <location evidence="4">Cell membrane</location>
        <topology evidence="4">Lipid-anchor</topology>
        <topology evidence="4">GPI-anchor</topology>
        <orientation evidence="12">Extracellular side</orientation>
    </subcellularLocation>
</comment>
<comment type="tissue specificity">
    <text evidence="7">Mostly expressed in flowers and stems, and, to a lower extent, in leaves and roots.</text>
</comment>
<comment type="developmental stage">
    <text evidence="9">Starts to accumulate in 7-10 days old plant leaves.</text>
</comment>
<comment type="domain">
    <text evidence="3">The conserved cysteine present in the cysteine-switch motif binds the catalytic zinc ion, thus inhibiting the enzyme. The dissociation of the cysteine from the zinc ion upon the activation-peptide release activates the enzyme.</text>
</comment>
<comment type="similarity">
    <text evidence="12">Belongs to the peptidase M10A family. Matrix metalloproteinases (MMPs) subfamily.</text>
</comment>
<evidence type="ECO:0000250" key="1"/>
<evidence type="ECO:0000250" key="2">
    <source>
        <dbReference type="UniProtKB" id="O23507"/>
    </source>
</evidence>
<evidence type="ECO:0000250" key="3">
    <source>
        <dbReference type="UniProtKB" id="P29136"/>
    </source>
</evidence>
<evidence type="ECO:0000255" key="4"/>
<evidence type="ECO:0000255" key="5">
    <source>
        <dbReference type="PROSITE-ProRule" id="PRU00498"/>
    </source>
</evidence>
<evidence type="ECO:0000255" key="6">
    <source>
        <dbReference type="PROSITE-ProRule" id="PRU10095"/>
    </source>
</evidence>
<evidence type="ECO:0000269" key="7">
    <source>
    </source>
</evidence>
<evidence type="ECO:0000269" key="8">
    <source>
    </source>
</evidence>
<evidence type="ECO:0000269" key="9">
    <source ref="1"/>
</evidence>
<evidence type="ECO:0000303" key="10">
    <source>
    </source>
</evidence>
<evidence type="ECO:0000303" key="11">
    <source ref="1"/>
</evidence>
<evidence type="ECO:0000305" key="12"/>
<evidence type="ECO:0000312" key="13">
    <source>
        <dbReference type="Araport" id="AT2G45040"/>
    </source>
</evidence>
<evidence type="ECO:0000312" key="14">
    <source>
        <dbReference type="EMBL" id="BAC43190.1"/>
    </source>
</evidence>